<reference key="1">
    <citation type="journal article" date="2003" name="Cladistics">
        <title>Phylogenetics of Sigmodontinae (Rodentia, Muroidea, Cricetidae), with special reference to the akodont group, and with additional comments on historical biogeography.</title>
        <authorList>
            <person name="D'Elia G."/>
        </authorList>
    </citation>
    <scope>NUCLEOTIDE SEQUENCE [GENOMIC DNA]</scope>
</reference>
<geneLocation type="mitochondrion"/>
<feature type="chain" id="PRO_0000257875" description="Cytochrome b">
    <location>
        <begin position="1"/>
        <end position="379"/>
    </location>
</feature>
<feature type="transmembrane region" description="Helical" evidence="2">
    <location>
        <begin position="33"/>
        <end position="53"/>
    </location>
</feature>
<feature type="transmembrane region" description="Helical" evidence="2">
    <location>
        <begin position="77"/>
        <end position="98"/>
    </location>
</feature>
<feature type="transmembrane region" description="Helical" evidence="2">
    <location>
        <begin position="113"/>
        <end position="133"/>
    </location>
</feature>
<feature type="transmembrane region" description="Helical" evidence="2">
    <location>
        <begin position="178"/>
        <end position="198"/>
    </location>
</feature>
<feature type="transmembrane region" description="Helical" evidence="2">
    <location>
        <begin position="226"/>
        <end position="246"/>
    </location>
</feature>
<feature type="transmembrane region" description="Helical" evidence="2">
    <location>
        <begin position="288"/>
        <end position="308"/>
    </location>
</feature>
<feature type="transmembrane region" description="Helical" evidence="2">
    <location>
        <begin position="320"/>
        <end position="340"/>
    </location>
</feature>
<feature type="transmembrane region" description="Helical" evidence="2">
    <location>
        <begin position="347"/>
        <end position="367"/>
    </location>
</feature>
<feature type="binding site" description="axial binding residue" evidence="2">
    <location>
        <position position="83"/>
    </location>
    <ligand>
        <name>heme b</name>
        <dbReference type="ChEBI" id="CHEBI:60344"/>
        <label>b562</label>
    </ligand>
    <ligandPart>
        <name>Fe</name>
        <dbReference type="ChEBI" id="CHEBI:18248"/>
    </ligandPart>
</feature>
<feature type="binding site" description="axial binding residue" evidence="2">
    <location>
        <position position="97"/>
    </location>
    <ligand>
        <name>heme b</name>
        <dbReference type="ChEBI" id="CHEBI:60344"/>
        <label>b566</label>
    </ligand>
    <ligandPart>
        <name>Fe</name>
        <dbReference type="ChEBI" id="CHEBI:18248"/>
    </ligandPart>
</feature>
<feature type="binding site" description="axial binding residue" evidence="2">
    <location>
        <position position="182"/>
    </location>
    <ligand>
        <name>heme b</name>
        <dbReference type="ChEBI" id="CHEBI:60344"/>
        <label>b562</label>
    </ligand>
    <ligandPart>
        <name>Fe</name>
        <dbReference type="ChEBI" id="CHEBI:18248"/>
    </ligandPart>
</feature>
<feature type="binding site" description="axial binding residue" evidence="2">
    <location>
        <position position="196"/>
    </location>
    <ligand>
        <name>heme b</name>
        <dbReference type="ChEBI" id="CHEBI:60344"/>
        <label>b566</label>
    </ligand>
    <ligandPart>
        <name>Fe</name>
        <dbReference type="ChEBI" id="CHEBI:18248"/>
    </ligandPart>
</feature>
<feature type="binding site" evidence="2">
    <location>
        <position position="201"/>
    </location>
    <ligand>
        <name>a ubiquinone</name>
        <dbReference type="ChEBI" id="CHEBI:16389"/>
    </ligand>
</feature>
<sequence length="379" mass="42665">MKXMRKNHPLLKIVNHSFIDLPTPSNISSWWKFGSLLGICLMIQILTGLFLAMHYTSDTATAFSSVAHICRDVNYGWLIRYLHANGASMFFICLFIHVGRGIYYGSYVLSETWNIGIILFLTTMATAFVGYVLPWGQMSFWGATVITNLLSAIPYIGTTLVEWIWGGFSVDKATLTRFFAFHFILPFIITALVLVHLLFLHETGSNNPSGLNSNSDKIPFHPYYTLKDLLGILLLLMALMILALFFPDVLGDPDNFTPANPLNTPAHIKPEWYFLFAYAILRSIPNKLGGVLALILSILILAMFPLLNTSKQHGLIYRPITQTIFWTFVANLLVLTWIGGQPVEYPFTTIGQIASITYFTIIIILMPMSNTIENNIIKL</sequence>
<organism>
    <name type="scientific">Necromys urichi</name>
    <name type="common">Northern grass mouse</name>
    <name type="synonym">Bolomys urichi</name>
    <dbReference type="NCBI Taxonomy" id="100644"/>
    <lineage>
        <taxon>Eukaryota</taxon>
        <taxon>Metazoa</taxon>
        <taxon>Chordata</taxon>
        <taxon>Craniata</taxon>
        <taxon>Vertebrata</taxon>
        <taxon>Euteleostomi</taxon>
        <taxon>Mammalia</taxon>
        <taxon>Eutheria</taxon>
        <taxon>Euarchontoglires</taxon>
        <taxon>Glires</taxon>
        <taxon>Rodentia</taxon>
        <taxon>Myomorpha</taxon>
        <taxon>Muroidea</taxon>
        <taxon>Cricetidae</taxon>
        <taxon>Sigmodontinae</taxon>
        <taxon>Necromys</taxon>
    </lineage>
</organism>
<evidence type="ECO:0000250" key="1"/>
<evidence type="ECO:0000250" key="2">
    <source>
        <dbReference type="UniProtKB" id="P00157"/>
    </source>
</evidence>
<evidence type="ECO:0000255" key="3">
    <source>
        <dbReference type="PROSITE-ProRule" id="PRU00967"/>
    </source>
</evidence>
<evidence type="ECO:0000255" key="4">
    <source>
        <dbReference type="PROSITE-ProRule" id="PRU00968"/>
    </source>
</evidence>
<name>CYB_NECUR</name>
<dbReference type="EMBL" id="AY273918">
    <property type="protein sequence ID" value="AAQ20035.1"/>
    <property type="molecule type" value="Genomic_DNA"/>
</dbReference>
<dbReference type="GO" id="GO:0005743">
    <property type="term" value="C:mitochondrial inner membrane"/>
    <property type="evidence" value="ECO:0007669"/>
    <property type="project" value="UniProtKB-SubCell"/>
</dbReference>
<dbReference type="GO" id="GO:0045275">
    <property type="term" value="C:respiratory chain complex III"/>
    <property type="evidence" value="ECO:0007669"/>
    <property type="project" value="InterPro"/>
</dbReference>
<dbReference type="GO" id="GO:0046872">
    <property type="term" value="F:metal ion binding"/>
    <property type="evidence" value="ECO:0007669"/>
    <property type="project" value="UniProtKB-KW"/>
</dbReference>
<dbReference type="GO" id="GO:0008121">
    <property type="term" value="F:ubiquinol-cytochrome-c reductase activity"/>
    <property type="evidence" value="ECO:0007669"/>
    <property type="project" value="InterPro"/>
</dbReference>
<dbReference type="GO" id="GO:0006122">
    <property type="term" value="P:mitochondrial electron transport, ubiquinol to cytochrome c"/>
    <property type="evidence" value="ECO:0007669"/>
    <property type="project" value="TreeGrafter"/>
</dbReference>
<dbReference type="CDD" id="cd00290">
    <property type="entry name" value="cytochrome_b_C"/>
    <property type="match status" value="1"/>
</dbReference>
<dbReference type="CDD" id="cd00284">
    <property type="entry name" value="Cytochrome_b_N"/>
    <property type="match status" value="1"/>
</dbReference>
<dbReference type="FunFam" id="1.20.810.10:FF:000002">
    <property type="entry name" value="Cytochrome b"/>
    <property type="match status" value="1"/>
</dbReference>
<dbReference type="Gene3D" id="1.20.810.10">
    <property type="entry name" value="Cytochrome Bc1 Complex, Chain C"/>
    <property type="match status" value="1"/>
</dbReference>
<dbReference type="InterPro" id="IPR005798">
    <property type="entry name" value="Cyt_b/b6_C"/>
</dbReference>
<dbReference type="InterPro" id="IPR036150">
    <property type="entry name" value="Cyt_b/b6_C_sf"/>
</dbReference>
<dbReference type="InterPro" id="IPR005797">
    <property type="entry name" value="Cyt_b/b6_N"/>
</dbReference>
<dbReference type="InterPro" id="IPR027387">
    <property type="entry name" value="Cytb/b6-like_sf"/>
</dbReference>
<dbReference type="InterPro" id="IPR030689">
    <property type="entry name" value="Cytochrome_b"/>
</dbReference>
<dbReference type="InterPro" id="IPR048260">
    <property type="entry name" value="Cytochrome_b_C_euk/bac"/>
</dbReference>
<dbReference type="InterPro" id="IPR048259">
    <property type="entry name" value="Cytochrome_b_N_euk/bac"/>
</dbReference>
<dbReference type="InterPro" id="IPR016174">
    <property type="entry name" value="Di-haem_cyt_TM"/>
</dbReference>
<dbReference type="PANTHER" id="PTHR19271">
    <property type="entry name" value="CYTOCHROME B"/>
    <property type="match status" value="1"/>
</dbReference>
<dbReference type="PANTHER" id="PTHR19271:SF16">
    <property type="entry name" value="CYTOCHROME B"/>
    <property type="match status" value="1"/>
</dbReference>
<dbReference type="Pfam" id="PF00032">
    <property type="entry name" value="Cytochrom_B_C"/>
    <property type="match status" value="1"/>
</dbReference>
<dbReference type="Pfam" id="PF00033">
    <property type="entry name" value="Cytochrome_B"/>
    <property type="match status" value="1"/>
</dbReference>
<dbReference type="PIRSF" id="PIRSF038885">
    <property type="entry name" value="COB"/>
    <property type="match status" value="1"/>
</dbReference>
<dbReference type="SUPFAM" id="SSF81648">
    <property type="entry name" value="a domain/subunit of cytochrome bc1 complex (Ubiquinol-cytochrome c reductase)"/>
    <property type="match status" value="1"/>
</dbReference>
<dbReference type="SUPFAM" id="SSF81342">
    <property type="entry name" value="Transmembrane di-heme cytochromes"/>
    <property type="match status" value="1"/>
</dbReference>
<dbReference type="PROSITE" id="PS51003">
    <property type="entry name" value="CYTB_CTER"/>
    <property type="match status" value="1"/>
</dbReference>
<dbReference type="PROSITE" id="PS51002">
    <property type="entry name" value="CYTB_NTER"/>
    <property type="match status" value="1"/>
</dbReference>
<keyword id="KW-0249">Electron transport</keyword>
<keyword id="KW-0349">Heme</keyword>
<keyword id="KW-0408">Iron</keyword>
<keyword id="KW-0472">Membrane</keyword>
<keyword id="KW-0479">Metal-binding</keyword>
<keyword id="KW-0496">Mitochondrion</keyword>
<keyword id="KW-0999">Mitochondrion inner membrane</keyword>
<keyword id="KW-0679">Respiratory chain</keyword>
<keyword id="KW-0812">Transmembrane</keyword>
<keyword id="KW-1133">Transmembrane helix</keyword>
<keyword id="KW-0813">Transport</keyword>
<keyword id="KW-0830">Ubiquinone</keyword>
<proteinExistence type="inferred from homology"/>
<gene>
    <name type="primary">MT-CYB</name>
    <name type="synonym">COB</name>
    <name type="synonym">CYTB</name>
    <name type="synonym">MTCYB</name>
</gene>
<accession>Q6WRG2</accession>
<protein>
    <recommendedName>
        <fullName>Cytochrome b</fullName>
    </recommendedName>
    <alternativeName>
        <fullName>Complex III subunit 3</fullName>
    </alternativeName>
    <alternativeName>
        <fullName>Complex III subunit III</fullName>
    </alternativeName>
    <alternativeName>
        <fullName>Cytochrome b-c1 complex subunit 3</fullName>
    </alternativeName>
    <alternativeName>
        <fullName>Ubiquinol-cytochrome-c reductase complex cytochrome b subunit</fullName>
    </alternativeName>
</protein>
<comment type="function">
    <text evidence="2">Component of the ubiquinol-cytochrome c reductase complex (complex III or cytochrome b-c1 complex) that is part of the mitochondrial respiratory chain. The b-c1 complex mediates electron transfer from ubiquinol to cytochrome c. Contributes to the generation of a proton gradient across the mitochondrial membrane that is then used for ATP synthesis.</text>
</comment>
<comment type="cofactor">
    <cofactor evidence="2">
        <name>heme b</name>
        <dbReference type="ChEBI" id="CHEBI:60344"/>
    </cofactor>
    <text evidence="2">Binds 2 heme b groups non-covalently.</text>
</comment>
<comment type="subunit">
    <text evidence="2">The cytochrome bc1 complex contains 11 subunits: 3 respiratory subunits (MT-CYB, CYC1 and UQCRFS1), 2 core proteins (UQCRC1 and UQCRC2) and 6 low-molecular weight proteins (UQCRH/QCR6, UQCRB/QCR7, UQCRQ/QCR8, UQCR10/QCR9, UQCR11/QCR10 and a cleavage product of UQCRFS1). This cytochrome bc1 complex then forms a dimer.</text>
</comment>
<comment type="subcellular location">
    <subcellularLocation>
        <location evidence="2">Mitochondrion inner membrane</location>
        <topology evidence="2">Multi-pass membrane protein</topology>
    </subcellularLocation>
</comment>
<comment type="miscellaneous">
    <text evidence="1">Heme 1 (or BL or b562) is low-potential and absorbs at about 562 nm, and heme 2 (or BH or b566) is high-potential and absorbs at about 566 nm.</text>
</comment>
<comment type="similarity">
    <text evidence="3 4">Belongs to the cytochrome b family.</text>
</comment>
<comment type="caution">
    <text evidence="2">The full-length protein contains only eight transmembrane helices, not nine as predicted by bioinformatics tools.</text>
</comment>